<proteinExistence type="inferred from homology"/>
<feature type="chain" id="PRO_1000071904" description="Glycine cleavage system H protein">
    <location>
        <begin position="1"/>
        <end position="125"/>
    </location>
</feature>
<feature type="domain" description="Lipoyl-binding" evidence="2">
    <location>
        <begin position="19"/>
        <end position="101"/>
    </location>
</feature>
<feature type="modified residue" description="N6-lipoyllysine" evidence="1">
    <location>
        <position position="60"/>
    </location>
</feature>
<sequence length="125" mass="13581">MSDIRFTDQHEWVRVDGDIATIGITDYAQEQLGDVVFVELPEVGKDIAAGDEAAVVESVKAASEVYSPVSGEVIDVNSDIEKTPAGVNENAMGDGWFIKLRLADPSELDKLMDEAAYSEFVESLQ</sequence>
<name>GCSH_PARL1</name>
<dbReference type="EMBL" id="CP000774">
    <property type="protein sequence ID" value="ABS62312.1"/>
    <property type="molecule type" value="Genomic_DNA"/>
</dbReference>
<dbReference type="RefSeq" id="WP_011995603.1">
    <property type="nucleotide sequence ID" value="NC_009719.1"/>
</dbReference>
<dbReference type="SMR" id="A7HQX9"/>
<dbReference type="STRING" id="402881.Plav_0689"/>
<dbReference type="KEGG" id="pla:Plav_0689"/>
<dbReference type="eggNOG" id="COG0509">
    <property type="taxonomic scope" value="Bacteria"/>
</dbReference>
<dbReference type="HOGENOM" id="CLU_097408_2_2_5"/>
<dbReference type="OrthoDB" id="9796712at2"/>
<dbReference type="Proteomes" id="UP000006377">
    <property type="component" value="Chromosome"/>
</dbReference>
<dbReference type="GO" id="GO:0005829">
    <property type="term" value="C:cytosol"/>
    <property type="evidence" value="ECO:0007669"/>
    <property type="project" value="TreeGrafter"/>
</dbReference>
<dbReference type="GO" id="GO:0005960">
    <property type="term" value="C:glycine cleavage complex"/>
    <property type="evidence" value="ECO:0007669"/>
    <property type="project" value="InterPro"/>
</dbReference>
<dbReference type="GO" id="GO:0019464">
    <property type="term" value="P:glycine decarboxylation via glycine cleavage system"/>
    <property type="evidence" value="ECO:0007669"/>
    <property type="project" value="UniProtKB-UniRule"/>
</dbReference>
<dbReference type="CDD" id="cd06848">
    <property type="entry name" value="GCS_H"/>
    <property type="match status" value="1"/>
</dbReference>
<dbReference type="Gene3D" id="2.40.50.100">
    <property type="match status" value="1"/>
</dbReference>
<dbReference type="HAMAP" id="MF_00272">
    <property type="entry name" value="GcvH"/>
    <property type="match status" value="1"/>
</dbReference>
<dbReference type="InterPro" id="IPR003016">
    <property type="entry name" value="2-oxoA_DH_lipoyl-BS"/>
</dbReference>
<dbReference type="InterPro" id="IPR000089">
    <property type="entry name" value="Biotin_lipoyl"/>
</dbReference>
<dbReference type="InterPro" id="IPR002930">
    <property type="entry name" value="GCV_H"/>
</dbReference>
<dbReference type="InterPro" id="IPR033753">
    <property type="entry name" value="GCV_H/Fam206"/>
</dbReference>
<dbReference type="InterPro" id="IPR017453">
    <property type="entry name" value="GCV_H_sub"/>
</dbReference>
<dbReference type="InterPro" id="IPR011053">
    <property type="entry name" value="Single_hybrid_motif"/>
</dbReference>
<dbReference type="NCBIfam" id="TIGR00527">
    <property type="entry name" value="gcvH"/>
    <property type="match status" value="1"/>
</dbReference>
<dbReference type="NCBIfam" id="NF002270">
    <property type="entry name" value="PRK01202.1"/>
    <property type="match status" value="1"/>
</dbReference>
<dbReference type="PANTHER" id="PTHR11715">
    <property type="entry name" value="GLYCINE CLEAVAGE SYSTEM H PROTEIN"/>
    <property type="match status" value="1"/>
</dbReference>
<dbReference type="PANTHER" id="PTHR11715:SF3">
    <property type="entry name" value="GLYCINE CLEAVAGE SYSTEM H PROTEIN-RELATED"/>
    <property type="match status" value="1"/>
</dbReference>
<dbReference type="Pfam" id="PF01597">
    <property type="entry name" value="GCV_H"/>
    <property type="match status" value="1"/>
</dbReference>
<dbReference type="SUPFAM" id="SSF51230">
    <property type="entry name" value="Single hybrid motif"/>
    <property type="match status" value="1"/>
</dbReference>
<dbReference type="PROSITE" id="PS50968">
    <property type="entry name" value="BIOTINYL_LIPOYL"/>
    <property type="match status" value="1"/>
</dbReference>
<dbReference type="PROSITE" id="PS00189">
    <property type="entry name" value="LIPOYL"/>
    <property type="match status" value="1"/>
</dbReference>
<keyword id="KW-0450">Lipoyl</keyword>
<keyword id="KW-1185">Reference proteome</keyword>
<gene>
    <name evidence="1" type="primary">gcvH</name>
    <name type="ordered locus">Plav_0689</name>
</gene>
<accession>A7HQX9</accession>
<reference key="1">
    <citation type="journal article" date="2011" name="Stand. Genomic Sci.">
        <title>Complete genome sequence of Parvibaculum lavamentivorans type strain (DS-1(T)).</title>
        <authorList>
            <person name="Schleheck D."/>
            <person name="Weiss M."/>
            <person name="Pitluck S."/>
            <person name="Bruce D."/>
            <person name="Land M.L."/>
            <person name="Han S."/>
            <person name="Saunders E."/>
            <person name="Tapia R."/>
            <person name="Detter C."/>
            <person name="Brettin T."/>
            <person name="Han J."/>
            <person name="Woyke T."/>
            <person name="Goodwin L."/>
            <person name="Pennacchio L."/>
            <person name="Nolan M."/>
            <person name="Cook A.M."/>
            <person name="Kjelleberg S."/>
            <person name="Thomas T."/>
        </authorList>
    </citation>
    <scope>NUCLEOTIDE SEQUENCE [LARGE SCALE GENOMIC DNA]</scope>
    <source>
        <strain>DS-1 / DSM 13023 / NCIMB 13966</strain>
    </source>
</reference>
<comment type="function">
    <text evidence="1">The glycine cleavage system catalyzes the degradation of glycine. The H protein shuttles the methylamine group of glycine from the P protein to the T protein.</text>
</comment>
<comment type="cofactor">
    <cofactor evidence="1">
        <name>(R)-lipoate</name>
        <dbReference type="ChEBI" id="CHEBI:83088"/>
    </cofactor>
    <text evidence="1">Binds 1 lipoyl cofactor covalently.</text>
</comment>
<comment type="subunit">
    <text evidence="1">The glycine cleavage system is composed of four proteins: P, T, L and H.</text>
</comment>
<comment type="similarity">
    <text evidence="1">Belongs to the GcvH family.</text>
</comment>
<evidence type="ECO:0000255" key="1">
    <source>
        <dbReference type="HAMAP-Rule" id="MF_00272"/>
    </source>
</evidence>
<evidence type="ECO:0000255" key="2">
    <source>
        <dbReference type="PROSITE-ProRule" id="PRU01066"/>
    </source>
</evidence>
<protein>
    <recommendedName>
        <fullName evidence="1">Glycine cleavage system H protein</fullName>
    </recommendedName>
</protein>
<organism>
    <name type="scientific">Parvibaculum lavamentivorans (strain DS-1 / DSM 13023 / NCIMB 13966)</name>
    <dbReference type="NCBI Taxonomy" id="402881"/>
    <lineage>
        <taxon>Bacteria</taxon>
        <taxon>Pseudomonadati</taxon>
        <taxon>Pseudomonadota</taxon>
        <taxon>Alphaproteobacteria</taxon>
        <taxon>Hyphomicrobiales</taxon>
        <taxon>Parvibaculaceae</taxon>
        <taxon>Parvibaculum</taxon>
    </lineage>
</organism>